<gene>
    <name type="primary">tipA</name>
    <name type="ordered locus">SCO3413</name>
    <name type="ORF">SCE9.20</name>
</gene>
<evidence type="ECO:0000250" key="1"/>
<evidence type="ECO:0000255" key="2">
    <source>
        <dbReference type="PROSITE-ProRule" id="PRU00254"/>
    </source>
</evidence>
<evidence type="ECO:0000305" key="3"/>
<organism>
    <name type="scientific">Streptomyces coelicolor (strain ATCC BAA-471 / A3(2) / M145)</name>
    <dbReference type="NCBI Taxonomy" id="100226"/>
    <lineage>
        <taxon>Bacteria</taxon>
        <taxon>Bacillati</taxon>
        <taxon>Actinomycetota</taxon>
        <taxon>Actinomycetes</taxon>
        <taxon>Kitasatosporales</taxon>
        <taxon>Streptomycetaceae</taxon>
        <taxon>Streptomyces</taxon>
        <taxon>Streptomyces albidoflavus group</taxon>
    </lineage>
</organism>
<dbReference type="EMBL" id="AL939116">
    <property type="protein sequence ID" value="CAB42766.1"/>
    <property type="molecule type" value="Genomic_DNA"/>
</dbReference>
<dbReference type="PIR" id="T36339">
    <property type="entry name" value="T36339"/>
</dbReference>
<dbReference type="RefSeq" id="NP_627619.1">
    <property type="nucleotide sequence ID" value="NC_003888.3"/>
</dbReference>
<dbReference type="RefSeq" id="WP_003975420.1">
    <property type="nucleotide sequence ID" value="NZ_VNID01000023.1"/>
</dbReference>
<dbReference type="BMRB" id="P0A4T8"/>
<dbReference type="SMR" id="P0A4T8"/>
<dbReference type="STRING" id="100226.gene:17761035"/>
<dbReference type="PaxDb" id="100226-SCO3413"/>
<dbReference type="KEGG" id="sco:SCO3413"/>
<dbReference type="PATRIC" id="fig|100226.15.peg.3476"/>
<dbReference type="eggNOG" id="COG0789">
    <property type="taxonomic scope" value="Bacteria"/>
</dbReference>
<dbReference type="HOGENOM" id="CLU_060077_0_6_11"/>
<dbReference type="InParanoid" id="P0A4T8"/>
<dbReference type="OrthoDB" id="9809391at2"/>
<dbReference type="PhylomeDB" id="P0A4T8"/>
<dbReference type="Proteomes" id="UP000001973">
    <property type="component" value="Chromosome"/>
</dbReference>
<dbReference type="GO" id="GO:0003677">
    <property type="term" value="F:DNA binding"/>
    <property type="evidence" value="ECO:0007669"/>
    <property type="project" value="UniProtKB-KW"/>
</dbReference>
<dbReference type="GO" id="GO:0003700">
    <property type="term" value="F:DNA-binding transcription factor activity"/>
    <property type="evidence" value="ECO:0000318"/>
    <property type="project" value="GO_Central"/>
</dbReference>
<dbReference type="GO" id="GO:0006355">
    <property type="term" value="P:regulation of DNA-templated transcription"/>
    <property type="evidence" value="ECO:0000318"/>
    <property type="project" value="GO_Central"/>
</dbReference>
<dbReference type="CDD" id="cd01106">
    <property type="entry name" value="HTH_TipAL-Mta"/>
    <property type="match status" value="1"/>
</dbReference>
<dbReference type="Gene3D" id="1.10.1660.10">
    <property type="match status" value="1"/>
</dbReference>
<dbReference type="Gene3D" id="1.10.490.50">
    <property type="entry name" value="Antibiotic binding domain of TipA-like multidrug resistance regulators"/>
    <property type="match status" value="1"/>
</dbReference>
<dbReference type="InterPro" id="IPR009061">
    <property type="entry name" value="DNA-bd_dom_put_sf"/>
</dbReference>
<dbReference type="InterPro" id="IPR000551">
    <property type="entry name" value="MerR-type_HTH_dom"/>
</dbReference>
<dbReference type="InterPro" id="IPR047057">
    <property type="entry name" value="MerR_fam"/>
</dbReference>
<dbReference type="InterPro" id="IPR036244">
    <property type="entry name" value="TipA-like_antibiotic-bd"/>
</dbReference>
<dbReference type="InterPro" id="IPR012925">
    <property type="entry name" value="TipAS_dom"/>
</dbReference>
<dbReference type="PANTHER" id="PTHR30204:SF90">
    <property type="entry name" value="HTH-TYPE TRANSCRIPTIONAL ACTIVATOR MTA"/>
    <property type="match status" value="1"/>
</dbReference>
<dbReference type="PANTHER" id="PTHR30204">
    <property type="entry name" value="REDOX-CYCLING DRUG-SENSING TRANSCRIPTIONAL ACTIVATOR SOXR"/>
    <property type="match status" value="1"/>
</dbReference>
<dbReference type="Pfam" id="PF13411">
    <property type="entry name" value="MerR_1"/>
    <property type="match status" value="1"/>
</dbReference>
<dbReference type="Pfam" id="PF07739">
    <property type="entry name" value="TipAS"/>
    <property type="match status" value="1"/>
</dbReference>
<dbReference type="PRINTS" id="PR00040">
    <property type="entry name" value="HTHMERR"/>
</dbReference>
<dbReference type="SMART" id="SM00422">
    <property type="entry name" value="HTH_MERR"/>
    <property type="match status" value="1"/>
</dbReference>
<dbReference type="SUPFAM" id="SSF89082">
    <property type="entry name" value="Antibiotic binding domain of TipA-like multidrug resistance regulators"/>
    <property type="match status" value="1"/>
</dbReference>
<dbReference type="SUPFAM" id="SSF46955">
    <property type="entry name" value="Putative DNA-binding domain"/>
    <property type="match status" value="1"/>
</dbReference>
<dbReference type="PROSITE" id="PS00552">
    <property type="entry name" value="HTH_MERR_1"/>
    <property type="match status" value="1"/>
</dbReference>
<dbReference type="PROSITE" id="PS50937">
    <property type="entry name" value="HTH_MERR_2"/>
    <property type="match status" value="1"/>
</dbReference>
<keyword id="KW-0010">Activator</keyword>
<keyword id="KW-0238">DNA-binding</keyword>
<keyword id="KW-1185">Reference proteome</keyword>
<keyword id="KW-0804">Transcription</keyword>
<keyword id="KW-0805">Transcription regulation</keyword>
<proteinExistence type="inferred from homology"/>
<protein>
    <recommendedName>
        <fullName>HTH-type transcriptional activator TipA</fullName>
    </recommendedName>
</protein>
<name>TIPA_STRCO</name>
<reference key="1">
    <citation type="journal article" date="2002" name="Nature">
        <title>Complete genome sequence of the model actinomycete Streptomyces coelicolor A3(2).</title>
        <authorList>
            <person name="Bentley S.D."/>
            <person name="Chater K.F."/>
            <person name="Cerdeno-Tarraga A.-M."/>
            <person name="Challis G.L."/>
            <person name="Thomson N.R."/>
            <person name="James K.D."/>
            <person name="Harris D.E."/>
            <person name="Quail M.A."/>
            <person name="Kieser H."/>
            <person name="Harper D."/>
            <person name="Bateman A."/>
            <person name="Brown S."/>
            <person name="Chandra G."/>
            <person name="Chen C.W."/>
            <person name="Collins M."/>
            <person name="Cronin A."/>
            <person name="Fraser A."/>
            <person name="Goble A."/>
            <person name="Hidalgo J."/>
            <person name="Hornsby T."/>
            <person name="Howarth S."/>
            <person name="Huang C.-H."/>
            <person name="Kieser T."/>
            <person name="Larke L."/>
            <person name="Murphy L.D."/>
            <person name="Oliver K."/>
            <person name="O'Neil S."/>
            <person name="Rabbinowitsch E."/>
            <person name="Rajandream M.A."/>
            <person name="Rutherford K.M."/>
            <person name="Rutter S."/>
            <person name="Seeger K."/>
            <person name="Saunders D."/>
            <person name="Sharp S."/>
            <person name="Squares R."/>
            <person name="Squares S."/>
            <person name="Taylor K."/>
            <person name="Warren T."/>
            <person name="Wietzorrek A."/>
            <person name="Woodward J.R."/>
            <person name="Barrell B.G."/>
            <person name="Parkhill J."/>
            <person name="Hopwood D.A."/>
        </authorList>
    </citation>
    <scope>NUCLEOTIDE SEQUENCE [LARGE SCALE GENOMIC DNA]</scope>
    <source>
        <strain>ATCC BAA-471 / A3(2) / M145</strain>
    </source>
</reference>
<sequence length="253" mass="28711">MSYSVGQVAGFAGVTVRTLHHYDDIGLLVPSERSHAGHRRYSDADLDRLQQILFYRELGFPLDEVAALLDDPAADPRAHLRRQHELLSARIGKLQKMAAAVEQAMEARSMGINLTPEEKFEVFGDFDPDQYEEEVRERWGNTDAYRQSKEKTASYTKEDWQRIQDEADELTRRFVALMDAGEPADSEGAMDAAEDHRQGIARNHYDCGYEMHTCLGEMYVSDERFTRNIDAAKPGLAAYMRDAILANAVRHTP</sequence>
<feature type="chain" id="PRO_0000098157" description="HTH-type transcriptional activator TipA">
    <location>
        <begin position="1"/>
        <end position="253"/>
    </location>
</feature>
<feature type="domain" description="HTH merR-type" evidence="2">
    <location>
        <begin position="1"/>
        <end position="71"/>
    </location>
</feature>
<feature type="DNA-binding region" description="H-T-H motif" evidence="2">
    <location>
        <begin position="5"/>
        <end position="24"/>
    </location>
</feature>
<comment type="function">
    <text evidence="1">Transcriptional activator. Is activated when bound to the antibiotic thiostrepton (By similarity).</text>
</comment>
<comment type="subunit">
    <text evidence="3">Homodimer.</text>
</comment>
<accession>P0A4T8</accession>
<accession>P32184</accession>